<gene>
    <name evidence="1" type="primary">glnE</name>
    <name type="ordered locus">MMAR_3293</name>
</gene>
<organism>
    <name type="scientific">Mycobacterium marinum (strain ATCC BAA-535 / M)</name>
    <dbReference type="NCBI Taxonomy" id="216594"/>
    <lineage>
        <taxon>Bacteria</taxon>
        <taxon>Bacillati</taxon>
        <taxon>Actinomycetota</taxon>
        <taxon>Actinomycetes</taxon>
        <taxon>Mycobacteriales</taxon>
        <taxon>Mycobacteriaceae</taxon>
        <taxon>Mycobacterium</taxon>
        <taxon>Mycobacterium ulcerans group</taxon>
    </lineage>
</organism>
<protein>
    <recommendedName>
        <fullName evidence="1">Bifunctional glutamine synthetase adenylyltransferase/adenylyl-removing enzyme</fullName>
    </recommendedName>
    <alternativeName>
        <fullName evidence="1">ATP:glutamine synthetase adenylyltransferase</fullName>
    </alternativeName>
    <alternativeName>
        <fullName evidence="1">ATase</fullName>
    </alternativeName>
    <domain>
        <recommendedName>
            <fullName evidence="1">Glutamine synthetase adenylyl-L-tyrosine phosphorylase</fullName>
            <ecNumber evidence="1">2.7.7.89</ecNumber>
        </recommendedName>
        <alternativeName>
            <fullName evidence="1">Adenylyl removase</fullName>
            <shortName evidence="1">AR</shortName>
            <shortName evidence="1">AT-N</shortName>
        </alternativeName>
    </domain>
    <domain>
        <recommendedName>
            <fullName evidence="1">Glutamine synthetase adenylyl transferase</fullName>
            <ecNumber evidence="1">2.7.7.42</ecNumber>
        </recommendedName>
        <alternativeName>
            <fullName evidence="1">Adenylyl transferase</fullName>
            <shortName evidence="1">AT</shortName>
            <shortName evidence="1">AT-C</shortName>
        </alternativeName>
    </domain>
</protein>
<comment type="function">
    <text evidence="1">Involved in the regulation of glutamine synthetase GlnA, a key enzyme in the process to assimilate ammonia. When cellular nitrogen levels are high, the C-terminal adenylyl transferase (AT) inactivates GlnA by covalent transfer of an adenylyl group from ATP to specific tyrosine residue of GlnA, thus reducing its activity. Conversely, when nitrogen levels are low, the N-terminal adenylyl removase (AR) activates GlnA by removing the adenylyl group by phosphorolysis, increasing its activity. The regulatory region of GlnE binds the signal transduction protein PII (GlnB) which indicates the nitrogen status of the cell.</text>
</comment>
<comment type="catalytic activity">
    <reaction evidence="1">
        <text>[glutamine synthetase]-O(4)-(5'-adenylyl)-L-tyrosine + phosphate = [glutamine synthetase]-L-tyrosine + ADP</text>
        <dbReference type="Rhea" id="RHEA:43716"/>
        <dbReference type="Rhea" id="RHEA-COMP:10660"/>
        <dbReference type="Rhea" id="RHEA-COMP:10661"/>
        <dbReference type="ChEBI" id="CHEBI:43474"/>
        <dbReference type="ChEBI" id="CHEBI:46858"/>
        <dbReference type="ChEBI" id="CHEBI:83624"/>
        <dbReference type="ChEBI" id="CHEBI:456216"/>
        <dbReference type="EC" id="2.7.7.89"/>
    </reaction>
</comment>
<comment type="catalytic activity">
    <reaction evidence="1">
        <text>[glutamine synthetase]-L-tyrosine + ATP = [glutamine synthetase]-O(4)-(5'-adenylyl)-L-tyrosine + diphosphate</text>
        <dbReference type="Rhea" id="RHEA:18589"/>
        <dbReference type="Rhea" id="RHEA-COMP:10660"/>
        <dbReference type="Rhea" id="RHEA-COMP:10661"/>
        <dbReference type="ChEBI" id="CHEBI:30616"/>
        <dbReference type="ChEBI" id="CHEBI:33019"/>
        <dbReference type="ChEBI" id="CHEBI:46858"/>
        <dbReference type="ChEBI" id="CHEBI:83624"/>
        <dbReference type="EC" id="2.7.7.42"/>
    </reaction>
</comment>
<comment type="cofactor">
    <cofactor evidence="1">
        <name>Mg(2+)</name>
        <dbReference type="ChEBI" id="CHEBI:18420"/>
    </cofactor>
</comment>
<comment type="similarity">
    <text evidence="1">Belongs to the GlnE family.</text>
</comment>
<evidence type="ECO:0000255" key="1">
    <source>
        <dbReference type="HAMAP-Rule" id="MF_00802"/>
    </source>
</evidence>
<feature type="chain" id="PRO_1000133908" description="Bifunctional glutamine synthetase adenylyltransferase/adenylyl-removing enzyme">
    <location>
        <begin position="1"/>
        <end position="995"/>
    </location>
</feature>
<feature type="region of interest" description="Adenylyl removase" evidence="1">
    <location>
        <begin position="1"/>
        <end position="487"/>
    </location>
</feature>
<feature type="region of interest" description="Adenylyl transferase" evidence="1">
    <location>
        <begin position="492"/>
        <end position="995"/>
    </location>
</feature>
<sequence length="995" mass="108542">MNVTKPATQRPKLPSVGRLGLVDALAGARLAELGWTEHDDQAHVDLLWSLSRAPDADAALKVLVRLAENPDTGWDELNAALLNERSLRGRLFAVLGSSLSLGDHLVANPQSWKLLRGKVALPSHAALLESFVDLAEEVAAAPASAVHRLRALHRDHVLVLAGLDLAATVEDEPVLPFTVVAAHLADIADAALAAALRLAEKTVCRDRTPPRLAVIAMGKCGARELNYVSDVDVIFVAERADPISIRVAGEMMRVASSTFFEVDAGLRPEGRSGELVRTVESHIAYYQRWAKTWEFQALLKARAAVGDAELGQSYLAALMPMVWTACERDDFVAEVQAMRRRVEQLVPADIRGRELKLGTGGLRDVEFVAQLLQLVHGRSDESLHVASTVDALSALGEGGYIGREDAANMIASYEFLRLLEHRLQLQRLKRTHLLPEFDDEEAVRWLARAAHIRPDGRHDAAGMLREELKHQNVRVSRLHAKLFYQPLLESIAPAGLEIAGRGMTSEAAERQLAALGYEGPQTALKHMAALVNHSGRRARVQSVLLPRLLDWLSYAPDPDGGLLAYRRLSEALATQSWYLSTLRDKPTVGRRLMHVLGTSAFVPDLLMRAPEVIQNYGDGRTGPKLLETEPAAVARALIASAGRYSDPLRAIAAARTLRRRELARIGSADLLGLLEVTEVCRALTSVWVAVLQSALEAMIRANTPEGGRPLARIAVIGMGRLGGSELSYGSDADVMYVCEPASGVTDAQAVKWSTAVAEQVRAKLGTPSVDPPLEVDANLRPEGRNGPLVRTLASYEAYYAQWAQAWEIQALLRAHAVAGDAELGQRFLLLVDHTRYPPDGVSAEAVHEIRRIKARVESERLPRGADPNTHTKLGRGGLADIEWTVQLLQLQNAHEIEALHNTSTLESLDAIAEAKLVAEDEVKLLRQAWLTATRARNALVLVRGKPTDQLPGPGRQLNAVAVAAGWHNDDGGEFLDNYLRVTRRAKAVVRKVFGS</sequence>
<proteinExistence type="inferred from homology"/>
<accession>B2HHM1</accession>
<keyword id="KW-0067">ATP-binding</keyword>
<keyword id="KW-0460">Magnesium</keyword>
<keyword id="KW-0511">Multifunctional enzyme</keyword>
<keyword id="KW-0547">Nucleotide-binding</keyword>
<keyword id="KW-0548">Nucleotidyltransferase</keyword>
<keyword id="KW-1185">Reference proteome</keyword>
<keyword id="KW-0808">Transferase</keyword>
<reference key="1">
    <citation type="journal article" date="2008" name="Genome Res.">
        <title>Insights from the complete genome sequence of Mycobacterium marinum on the evolution of Mycobacterium tuberculosis.</title>
        <authorList>
            <person name="Stinear T.P."/>
            <person name="Seemann T."/>
            <person name="Harrison P.F."/>
            <person name="Jenkin G.A."/>
            <person name="Davies J.K."/>
            <person name="Johnson P.D."/>
            <person name="Abdellah Z."/>
            <person name="Arrowsmith C."/>
            <person name="Chillingworth T."/>
            <person name="Churcher C."/>
            <person name="Clarke K."/>
            <person name="Cronin A."/>
            <person name="Davis P."/>
            <person name="Goodhead I."/>
            <person name="Holroyd N."/>
            <person name="Jagels K."/>
            <person name="Lord A."/>
            <person name="Moule S."/>
            <person name="Mungall K."/>
            <person name="Norbertczak H."/>
            <person name="Quail M.A."/>
            <person name="Rabbinowitsch E."/>
            <person name="Walker D."/>
            <person name="White B."/>
            <person name="Whitehead S."/>
            <person name="Small P.L."/>
            <person name="Brosch R."/>
            <person name="Ramakrishnan L."/>
            <person name="Fischbach M.A."/>
            <person name="Parkhill J."/>
            <person name="Cole S.T."/>
        </authorList>
    </citation>
    <scope>NUCLEOTIDE SEQUENCE [LARGE SCALE GENOMIC DNA]</scope>
    <source>
        <strain>ATCC BAA-535 / M</strain>
    </source>
</reference>
<dbReference type="EC" id="2.7.7.89" evidence="1"/>
<dbReference type="EC" id="2.7.7.42" evidence="1"/>
<dbReference type="EMBL" id="CP000854">
    <property type="protein sequence ID" value="ACC41719.1"/>
    <property type="molecule type" value="Genomic_DNA"/>
</dbReference>
<dbReference type="RefSeq" id="WP_012394947.1">
    <property type="nucleotide sequence ID" value="NC_010612.1"/>
</dbReference>
<dbReference type="SMR" id="B2HHM1"/>
<dbReference type="STRING" id="216594.MMAR_3293"/>
<dbReference type="KEGG" id="mmi:MMAR_3293"/>
<dbReference type="eggNOG" id="COG1391">
    <property type="taxonomic scope" value="Bacteria"/>
</dbReference>
<dbReference type="HOGENOM" id="CLU_006233_1_0_11"/>
<dbReference type="OrthoDB" id="9759366at2"/>
<dbReference type="Proteomes" id="UP000001190">
    <property type="component" value="Chromosome"/>
</dbReference>
<dbReference type="GO" id="GO:0005829">
    <property type="term" value="C:cytosol"/>
    <property type="evidence" value="ECO:0007669"/>
    <property type="project" value="TreeGrafter"/>
</dbReference>
<dbReference type="GO" id="GO:0008882">
    <property type="term" value="F:[glutamate-ammonia-ligase] adenylyltransferase activity"/>
    <property type="evidence" value="ECO:0007669"/>
    <property type="project" value="UniProtKB-UniRule"/>
</dbReference>
<dbReference type="GO" id="GO:0047388">
    <property type="term" value="F:[glutamine synthetase]-adenylyl-L-tyrosine phosphorylase activity"/>
    <property type="evidence" value="ECO:0007669"/>
    <property type="project" value="UniProtKB-EC"/>
</dbReference>
<dbReference type="GO" id="GO:0005524">
    <property type="term" value="F:ATP binding"/>
    <property type="evidence" value="ECO:0007669"/>
    <property type="project" value="UniProtKB-UniRule"/>
</dbReference>
<dbReference type="GO" id="GO:0000287">
    <property type="term" value="F:magnesium ion binding"/>
    <property type="evidence" value="ECO:0007669"/>
    <property type="project" value="UniProtKB-UniRule"/>
</dbReference>
<dbReference type="GO" id="GO:0000820">
    <property type="term" value="P:regulation of glutamine family amino acid metabolic process"/>
    <property type="evidence" value="ECO:0007669"/>
    <property type="project" value="UniProtKB-UniRule"/>
</dbReference>
<dbReference type="CDD" id="cd05401">
    <property type="entry name" value="NT_GlnE_GlnD_like"/>
    <property type="match status" value="2"/>
</dbReference>
<dbReference type="FunFam" id="1.20.120.330:FF:000022">
    <property type="entry name" value="Bifunctional glutamine synthetase adenylyltransferase/adenylyl-removing enzyme"/>
    <property type="match status" value="1"/>
</dbReference>
<dbReference type="Gene3D" id="3.30.460.10">
    <property type="entry name" value="Beta Polymerase, domain 2"/>
    <property type="match status" value="2"/>
</dbReference>
<dbReference type="Gene3D" id="1.20.120.330">
    <property type="entry name" value="Nucleotidyltransferases domain 2"/>
    <property type="match status" value="2"/>
</dbReference>
<dbReference type="HAMAP" id="MF_00802">
    <property type="entry name" value="GlnE"/>
    <property type="match status" value="1"/>
</dbReference>
<dbReference type="InterPro" id="IPR023057">
    <property type="entry name" value="GlnE"/>
</dbReference>
<dbReference type="InterPro" id="IPR005190">
    <property type="entry name" value="GlnE_rpt_dom"/>
</dbReference>
<dbReference type="InterPro" id="IPR043519">
    <property type="entry name" value="NT_sf"/>
</dbReference>
<dbReference type="InterPro" id="IPR013546">
    <property type="entry name" value="PII_UdlTrfase/GS_AdlTrfase"/>
</dbReference>
<dbReference type="NCBIfam" id="NF010707">
    <property type="entry name" value="PRK14109.1"/>
    <property type="match status" value="1"/>
</dbReference>
<dbReference type="PANTHER" id="PTHR30621:SF0">
    <property type="entry name" value="BIFUNCTIONAL GLUTAMINE SYNTHETASE ADENYLYLTRANSFERASE_ADENYLYL-REMOVING ENZYME"/>
    <property type="match status" value="1"/>
</dbReference>
<dbReference type="PANTHER" id="PTHR30621">
    <property type="entry name" value="GLUTAMINE SYNTHETASE ADENYLYLTRANSFERASE"/>
    <property type="match status" value="1"/>
</dbReference>
<dbReference type="Pfam" id="PF08335">
    <property type="entry name" value="GlnD_UR_UTase"/>
    <property type="match status" value="2"/>
</dbReference>
<dbReference type="Pfam" id="PF03710">
    <property type="entry name" value="GlnE"/>
    <property type="match status" value="2"/>
</dbReference>
<dbReference type="SUPFAM" id="SSF81301">
    <property type="entry name" value="Nucleotidyltransferase"/>
    <property type="match status" value="2"/>
</dbReference>
<dbReference type="SUPFAM" id="SSF81593">
    <property type="entry name" value="Nucleotidyltransferase substrate binding subunit/domain"/>
    <property type="match status" value="2"/>
</dbReference>
<name>GLNE_MYCMM</name>